<organism>
    <name type="scientific">Clavibacter sepedonicus</name>
    <name type="common">Clavibacter michiganensis subsp. sepedonicus</name>
    <dbReference type="NCBI Taxonomy" id="31964"/>
    <lineage>
        <taxon>Bacteria</taxon>
        <taxon>Bacillati</taxon>
        <taxon>Actinomycetota</taxon>
        <taxon>Actinomycetes</taxon>
        <taxon>Micrococcales</taxon>
        <taxon>Microbacteriaceae</taxon>
        <taxon>Clavibacter</taxon>
    </lineage>
</organism>
<name>MSHC_CLASE</name>
<feature type="chain" id="PRO_0000400436" description="L-cysteine:1D-myo-inositol 2-amino-2-deoxy-alpha-D-glucopyranoside ligase">
    <location>
        <begin position="1"/>
        <end position="409"/>
    </location>
</feature>
<feature type="short sequence motif" description="'HIGH' region" evidence="1">
    <location>
        <begin position="27"/>
        <end position="37"/>
    </location>
</feature>
<feature type="short sequence motif" description="'ERGGDP' region" evidence="1">
    <location>
        <begin position="179"/>
        <end position="184"/>
    </location>
</feature>
<feature type="short sequence motif" description="'KMSKS' region" evidence="1">
    <location>
        <begin position="280"/>
        <end position="284"/>
    </location>
</feature>
<feature type="binding site" evidence="1">
    <location>
        <begin position="25"/>
        <end position="28"/>
    </location>
    <ligand>
        <name>L-cysteinyl-5'-AMP</name>
        <dbReference type="ChEBI" id="CHEBI:144924"/>
    </ligand>
</feature>
<feature type="binding site" evidence="1">
    <location>
        <position position="25"/>
    </location>
    <ligand>
        <name>Zn(2+)</name>
        <dbReference type="ChEBI" id="CHEBI:29105"/>
    </ligand>
</feature>
<feature type="binding site" evidence="1">
    <location>
        <position position="40"/>
    </location>
    <ligand>
        <name>L-cysteinyl-5'-AMP</name>
        <dbReference type="ChEBI" id="CHEBI:144924"/>
    </ligand>
</feature>
<feature type="binding site" evidence="1">
    <location>
        <begin position="63"/>
        <end position="65"/>
    </location>
    <ligand>
        <name>L-cysteinyl-5'-AMP</name>
        <dbReference type="ChEBI" id="CHEBI:144924"/>
    </ligand>
</feature>
<feature type="binding site" evidence="1">
    <location>
        <position position="219"/>
    </location>
    <ligand>
        <name>L-cysteinyl-5'-AMP</name>
        <dbReference type="ChEBI" id="CHEBI:144924"/>
    </ligand>
</feature>
<feature type="binding site" evidence="1">
    <location>
        <position position="223"/>
    </location>
    <ligand>
        <name>Zn(2+)</name>
        <dbReference type="ChEBI" id="CHEBI:29105"/>
    </ligand>
</feature>
<feature type="binding site" evidence="1">
    <location>
        <begin position="241"/>
        <end position="243"/>
    </location>
    <ligand>
        <name>L-cysteinyl-5'-AMP</name>
        <dbReference type="ChEBI" id="CHEBI:144924"/>
    </ligand>
</feature>
<feature type="binding site" evidence="1">
    <location>
        <position position="248"/>
    </location>
    <ligand>
        <name>Zn(2+)</name>
        <dbReference type="ChEBI" id="CHEBI:29105"/>
    </ligand>
</feature>
<feature type="binding site" evidence="1">
    <location>
        <position position="274"/>
    </location>
    <ligand>
        <name>L-cysteinyl-5'-AMP</name>
        <dbReference type="ChEBI" id="CHEBI:144924"/>
    </ligand>
</feature>
<evidence type="ECO:0000255" key="1">
    <source>
        <dbReference type="HAMAP-Rule" id="MF_01697"/>
    </source>
</evidence>
<dbReference type="EC" id="6.3.1.13" evidence="1"/>
<dbReference type="EMBL" id="AM849034">
    <property type="protein sequence ID" value="CAQ01778.1"/>
    <property type="molecule type" value="Genomic_DNA"/>
</dbReference>
<dbReference type="SMR" id="B0RC50"/>
<dbReference type="STRING" id="31964.CMS1669"/>
<dbReference type="KEGG" id="cms:CMS1669"/>
<dbReference type="eggNOG" id="COG0215">
    <property type="taxonomic scope" value="Bacteria"/>
</dbReference>
<dbReference type="HOGENOM" id="CLU_013528_0_0_11"/>
<dbReference type="Proteomes" id="UP000001318">
    <property type="component" value="Chromosome"/>
</dbReference>
<dbReference type="GO" id="GO:0005829">
    <property type="term" value="C:cytosol"/>
    <property type="evidence" value="ECO:0007669"/>
    <property type="project" value="TreeGrafter"/>
</dbReference>
<dbReference type="GO" id="GO:0005524">
    <property type="term" value="F:ATP binding"/>
    <property type="evidence" value="ECO:0007669"/>
    <property type="project" value="UniProtKB-KW"/>
</dbReference>
<dbReference type="GO" id="GO:0035446">
    <property type="term" value="F:cysteine-glucosaminylinositol ligase activity"/>
    <property type="evidence" value="ECO:0007669"/>
    <property type="project" value="UniProtKB-UniRule"/>
</dbReference>
<dbReference type="GO" id="GO:0004817">
    <property type="term" value="F:cysteine-tRNA ligase activity"/>
    <property type="evidence" value="ECO:0007669"/>
    <property type="project" value="TreeGrafter"/>
</dbReference>
<dbReference type="GO" id="GO:0008270">
    <property type="term" value="F:zinc ion binding"/>
    <property type="evidence" value="ECO:0007669"/>
    <property type="project" value="UniProtKB-UniRule"/>
</dbReference>
<dbReference type="GO" id="GO:0006423">
    <property type="term" value="P:cysteinyl-tRNA aminoacylation"/>
    <property type="evidence" value="ECO:0007669"/>
    <property type="project" value="TreeGrafter"/>
</dbReference>
<dbReference type="GO" id="GO:0010125">
    <property type="term" value="P:mycothiol biosynthetic process"/>
    <property type="evidence" value="ECO:0007669"/>
    <property type="project" value="UniProtKB-UniRule"/>
</dbReference>
<dbReference type="Gene3D" id="1.20.120.640">
    <property type="entry name" value="Anticodon-binding domain of a subclass of class I aminoacyl-tRNA synthetases"/>
    <property type="match status" value="1"/>
</dbReference>
<dbReference type="Gene3D" id="3.40.50.620">
    <property type="entry name" value="HUPs"/>
    <property type="match status" value="1"/>
</dbReference>
<dbReference type="HAMAP" id="MF_01697">
    <property type="entry name" value="MshC"/>
    <property type="match status" value="1"/>
</dbReference>
<dbReference type="InterPro" id="IPR024909">
    <property type="entry name" value="Cys-tRNA/MSH_ligase"/>
</dbReference>
<dbReference type="InterPro" id="IPR017812">
    <property type="entry name" value="Mycothiol_ligase_MshC"/>
</dbReference>
<dbReference type="InterPro" id="IPR014729">
    <property type="entry name" value="Rossmann-like_a/b/a_fold"/>
</dbReference>
<dbReference type="InterPro" id="IPR032678">
    <property type="entry name" value="tRNA-synt_1_cat_dom"/>
</dbReference>
<dbReference type="NCBIfam" id="TIGR03447">
    <property type="entry name" value="mycothiol_MshC"/>
    <property type="match status" value="1"/>
</dbReference>
<dbReference type="PANTHER" id="PTHR10890:SF3">
    <property type="entry name" value="CYSTEINE--TRNA LIGASE, CYTOPLASMIC"/>
    <property type="match status" value="1"/>
</dbReference>
<dbReference type="PANTHER" id="PTHR10890">
    <property type="entry name" value="CYSTEINYL-TRNA SYNTHETASE"/>
    <property type="match status" value="1"/>
</dbReference>
<dbReference type="Pfam" id="PF01406">
    <property type="entry name" value="tRNA-synt_1e"/>
    <property type="match status" value="1"/>
</dbReference>
<dbReference type="PRINTS" id="PR00983">
    <property type="entry name" value="TRNASYNTHCYS"/>
</dbReference>
<dbReference type="SUPFAM" id="SSF52374">
    <property type="entry name" value="Nucleotidylyl transferase"/>
    <property type="match status" value="1"/>
</dbReference>
<sequence>MFDTSAGSVRPAECTGDGRVGLYVCGITPYDATHIGHASTYLAFDTLQRVWLDRGYDVAYVQNVTDVDDPLLERATATGVDWRDLAAEQVELFRTDMEALRILPPDSYVGVTEVVDEVASAVAELVRRGTAYPVATPDAVVAGAQDLYFDVARAGEDGPWALGDESGYDLDTMAALSAERGGDPERPGKRDPLDPLLWRAERAGEPAWDSVVGRGRPGWHIECAVIALRKLDRPVTVQGGGSDLIFPHHEMSAGHAAALTGEDFACVYAHSGMVAYQGEKMSKSLGNLVLVSRLRAAGVDPRAIRLALLAQHYRADWEWTDELLAESVARLAAWDAWAAAADASATAGADAGEPGELVQLVRERLSEDLDTPGAILLLDLRVATGVPATPVELAAVDALLGVRLGSPAA</sequence>
<comment type="function">
    <text evidence="1">Catalyzes the ATP-dependent condensation of GlcN-Ins and L-cysteine to form L-Cys-GlcN-Ins.</text>
</comment>
<comment type="catalytic activity">
    <reaction evidence="1">
        <text>1D-myo-inositol 2-amino-2-deoxy-alpha-D-glucopyranoside + L-cysteine + ATP = 1D-myo-inositol 2-(L-cysteinylamino)-2-deoxy-alpha-D-glucopyranoside + AMP + diphosphate + H(+)</text>
        <dbReference type="Rhea" id="RHEA:26176"/>
        <dbReference type="ChEBI" id="CHEBI:15378"/>
        <dbReference type="ChEBI" id="CHEBI:30616"/>
        <dbReference type="ChEBI" id="CHEBI:33019"/>
        <dbReference type="ChEBI" id="CHEBI:35235"/>
        <dbReference type="ChEBI" id="CHEBI:58886"/>
        <dbReference type="ChEBI" id="CHEBI:58887"/>
        <dbReference type="ChEBI" id="CHEBI:456215"/>
        <dbReference type="EC" id="6.3.1.13"/>
    </reaction>
</comment>
<comment type="cofactor">
    <cofactor evidence="1">
        <name>Zn(2+)</name>
        <dbReference type="ChEBI" id="CHEBI:29105"/>
    </cofactor>
    <text evidence="1">Binds 1 zinc ion per subunit.</text>
</comment>
<comment type="subunit">
    <text evidence="1">Monomer.</text>
</comment>
<comment type="similarity">
    <text evidence="1">Belongs to the class-I aminoacyl-tRNA synthetase family. MshC subfamily.</text>
</comment>
<protein>
    <recommendedName>
        <fullName evidence="1">L-cysteine:1D-myo-inositol 2-amino-2-deoxy-alpha-D-glucopyranoside ligase</fullName>
        <shortName evidence="1">L-Cys:GlcN-Ins ligase</shortName>
        <ecNumber evidence="1">6.3.1.13</ecNumber>
    </recommendedName>
    <alternativeName>
        <fullName evidence="1">Mycothiol ligase</fullName>
        <shortName evidence="1">MSH ligase</shortName>
    </alternativeName>
</protein>
<proteinExistence type="inferred from homology"/>
<accession>B0RC50</accession>
<reference key="1">
    <citation type="journal article" date="2008" name="J. Bacteriol.">
        <title>Genome of the actinomycete plant pathogen Clavibacter michiganensis subsp. sepedonicus suggests recent niche adaptation.</title>
        <authorList>
            <person name="Bentley S.D."/>
            <person name="Corton C."/>
            <person name="Brown S.E."/>
            <person name="Barron A."/>
            <person name="Clark L."/>
            <person name="Doggett J."/>
            <person name="Harris B."/>
            <person name="Ormond D."/>
            <person name="Quail M.A."/>
            <person name="May G."/>
            <person name="Francis D."/>
            <person name="Knudson D."/>
            <person name="Parkhill J."/>
            <person name="Ishimaru C.A."/>
        </authorList>
    </citation>
    <scope>NUCLEOTIDE SEQUENCE [LARGE SCALE GENOMIC DNA]</scope>
    <source>
        <strain>ATCC 33113 / DSM 20744 / JCM 9667 / LMG 2889 / ICMP 2535 / C-1</strain>
    </source>
</reference>
<keyword id="KW-0067">ATP-binding</keyword>
<keyword id="KW-0436">Ligase</keyword>
<keyword id="KW-0479">Metal-binding</keyword>
<keyword id="KW-0547">Nucleotide-binding</keyword>
<keyword id="KW-0862">Zinc</keyword>
<gene>
    <name evidence="1" type="primary">mshC</name>
    <name type="ordered locus">CMS1669</name>
</gene>